<organism>
    <name type="scientific">Clostridium botulinum (strain Kyoto / Type A2)</name>
    <dbReference type="NCBI Taxonomy" id="536232"/>
    <lineage>
        <taxon>Bacteria</taxon>
        <taxon>Bacillati</taxon>
        <taxon>Bacillota</taxon>
        <taxon>Clostridia</taxon>
        <taxon>Eubacteriales</taxon>
        <taxon>Clostridiaceae</taxon>
        <taxon>Clostridium</taxon>
    </lineage>
</organism>
<gene>
    <name evidence="1" type="primary">efp</name>
    <name type="ordered locus">CLM_2114</name>
</gene>
<accession>C1FPC4</accession>
<reference key="1">
    <citation type="submission" date="2008-10" db="EMBL/GenBank/DDBJ databases">
        <title>Genome sequence of Clostridium botulinum A2 Kyoto.</title>
        <authorList>
            <person name="Shrivastava S."/>
            <person name="Brinkac L.M."/>
            <person name="Brown J.L."/>
            <person name="Bruce D."/>
            <person name="Detter C.C."/>
            <person name="Johnson E.A."/>
            <person name="Munk C.A."/>
            <person name="Smith L.A."/>
            <person name="Smith T.J."/>
            <person name="Sutton G."/>
            <person name="Brettin T.S."/>
        </authorList>
    </citation>
    <scope>NUCLEOTIDE SEQUENCE [LARGE SCALE GENOMIC DNA]</scope>
    <source>
        <strain>Kyoto / Type A2</strain>
    </source>
</reference>
<protein>
    <recommendedName>
        <fullName evidence="1">Elongation factor P</fullName>
        <shortName evidence="1">EF-P</shortName>
    </recommendedName>
</protein>
<evidence type="ECO:0000255" key="1">
    <source>
        <dbReference type="HAMAP-Rule" id="MF_00141"/>
    </source>
</evidence>
<comment type="function">
    <text evidence="1">Involved in peptide bond synthesis. Stimulates efficient translation and peptide-bond synthesis on native or reconstituted 70S ribosomes in vitro. Probably functions indirectly by altering the affinity of the ribosome for aminoacyl-tRNA, thus increasing their reactivity as acceptors for peptidyl transferase.</text>
</comment>
<comment type="pathway">
    <text evidence="1">Protein biosynthesis; polypeptide chain elongation.</text>
</comment>
<comment type="subcellular location">
    <subcellularLocation>
        <location evidence="1">Cytoplasm</location>
    </subcellularLocation>
</comment>
<comment type="similarity">
    <text evidence="1">Belongs to the elongation factor P family.</text>
</comment>
<proteinExistence type="inferred from homology"/>
<sequence length="185" mass="20828">MISAGDLRKGTTFEQDGQVYVVVEFLHVKPGKGAAFVRTKLKNAITGAVTETTFNPTAKLQEAVIERKEMQYLYTDGELYYFMDQETFEQIPLNYDKVEEAIKFLKENMFATIKFFKGEAFSVEAPNFVELLISHTEPGAKGNTTSNVMKPATLETGATIQVPLFVNEGETIRVDTRTGEYMERV</sequence>
<name>EFP_CLOBJ</name>
<keyword id="KW-0963">Cytoplasm</keyword>
<keyword id="KW-0251">Elongation factor</keyword>
<keyword id="KW-0648">Protein biosynthesis</keyword>
<feature type="chain" id="PRO_1000123001" description="Elongation factor P">
    <location>
        <begin position="1"/>
        <end position="185"/>
    </location>
</feature>
<dbReference type="EMBL" id="CP001581">
    <property type="protein sequence ID" value="ACO85403.1"/>
    <property type="molecule type" value="Genomic_DNA"/>
</dbReference>
<dbReference type="RefSeq" id="WP_003358905.1">
    <property type="nucleotide sequence ID" value="NC_012563.1"/>
</dbReference>
<dbReference type="SMR" id="C1FPC4"/>
<dbReference type="GeneID" id="5186152"/>
<dbReference type="KEGG" id="cby:CLM_2114"/>
<dbReference type="eggNOG" id="COG0231">
    <property type="taxonomic scope" value="Bacteria"/>
</dbReference>
<dbReference type="HOGENOM" id="CLU_074944_0_1_9"/>
<dbReference type="UniPathway" id="UPA00345"/>
<dbReference type="Proteomes" id="UP000001374">
    <property type="component" value="Chromosome"/>
</dbReference>
<dbReference type="GO" id="GO:0005737">
    <property type="term" value="C:cytoplasm"/>
    <property type="evidence" value="ECO:0007669"/>
    <property type="project" value="UniProtKB-SubCell"/>
</dbReference>
<dbReference type="GO" id="GO:0003746">
    <property type="term" value="F:translation elongation factor activity"/>
    <property type="evidence" value="ECO:0007669"/>
    <property type="project" value="UniProtKB-UniRule"/>
</dbReference>
<dbReference type="GO" id="GO:0043043">
    <property type="term" value="P:peptide biosynthetic process"/>
    <property type="evidence" value="ECO:0007669"/>
    <property type="project" value="InterPro"/>
</dbReference>
<dbReference type="CDD" id="cd04470">
    <property type="entry name" value="S1_EF-P_repeat_1"/>
    <property type="match status" value="1"/>
</dbReference>
<dbReference type="CDD" id="cd05794">
    <property type="entry name" value="S1_EF-P_repeat_2"/>
    <property type="match status" value="1"/>
</dbReference>
<dbReference type="FunFam" id="2.30.30.30:FF:000003">
    <property type="entry name" value="Elongation factor P"/>
    <property type="match status" value="1"/>
</dbReference>
<dbReference type="FunFam" id="2.40.50.140:FF:000004">
    <property type="entry name" value="Elongation factor P"/>
    <property type="match status" value="1"/>
</dbReference>
<dbReference type="FunFam" id="2.40.50.140:FF:000009">
    <property type="entry name" value="Elongation factor P"/>
    <property type="match status" value="1"/>
</dbReference>
<dbReference type="Gene3D" id="2.30.30.30">
    <property type="match status" value="1"/>
</dbReference>
<dbReference type="Gene3D" id="2.40.50.140">
    <property type="entry name" value="Nucleic acid-binding proteins"/>
    <property type="match status" value="2"/>
</dbReference>
<dbReference type="HAMAP" id="MF_00141">
    <property type="entry name" value="EF_P"/>
    <property type="match status" value="1"/>
</dbReference>
<dbReference type="InterPro" id="IPR015365">
    <property type="entry name" value="Elong-fact-P_C"/>
</dbReference>
<dbReference type="InterPro" id="IPR012340">
    <property type="entry name" value="NA-bd_OB-fold"/>
</dbReference>
<dbReference type="InterPro" id="IPR014722">
    <property type="entry name" value="Rib_uL2_dom2"/>
</dbReference>
<dbReference type="InterPro" id="IPR020599">
    <property type="entry name" value="Transl_elong_fac_P/YeiP"/>
</dbReference>
<dbReference type="InterPro" id="IPR013185">
    <property type="entry name" value="Transl_elong_KOW-like"/>
</dbReference>
<dbReference type="InterPro" id="IPR001059">
    <property type="entry name" value="Transl_elong_P/YeiP_cen"/>
</dbReference>
<dbReference type="InterPro" id="IPR013852">
    <property type="entry name" value="Transl_elong_P/YeiP_CS"/>
</dbReference>
<dbReference type="InterPro" id="IPR011768">
    <property type="entry name" value="Transl_elongation_fac_P"/>
</dbReference>
<dbReference type="InterPro" id="IPR008991">
    <property type="entry name" value="Translation_prot_SH3-like_sf"/>
</dbReference>
<dbReference type="NCBIfam" id="TIGR00038">
    <property type="entry name" value="efp"/>
    <property type="match status" value="1"/>
</dbReference>
<dbReference type="NCBIfam" id="NF001810">
    <property type="entry name" value="PRK00529.1"/>
    <property type="match status" value="1"/>
</dbReference>
<dbReference type="PANTHER" id="PTHR30053">
    <property type="entry name" value="ELONGATION FACTOR P"/>
    <property type="match status" value="1"/>
</dbReference>
<dbReference type="PANTHER" id="PTHR30053:SF12">
    <property type="entry name" value="ELONGATION FACTOR P (EF-P) FAMILY PROTEIN"/>
    <property type="match status" value="1"/>
</dbReference>
<dbReference type="Pfam" id="PF01132">
    <property type="entry name" value="EFP"/>
    <property type="match status" value="1"/>
</dbReference>
<dbReference type="Pfam" id="PF08207">
    <property type="entry name" value="EFP_N"/>
    <property type="match status" value="1"/>
</dbReference>
<dbReference type="Pfam" id="PF09285">
    <property type="entry name" value="Elong-fact-P_C"/>
    <property type="match status" value="1"/>
</dbReference>
<dbReference type="PIRSF" id="PIRSF005901">
    <property type="entry name" value="EF-P"/>
    <property type="match status" value="1"/>
</dbReference>
<dbReference type="SMART" id="SM01185">
    <property type="entry name" value="EFP"/>
    <property type="match status" value="1"/>
</dbReference>
<dbReference type="SMART" id="SM00841">
    <property type="entry name" value="Elong-fact-P_C"/>
    <property type="match status" value="1"/>
</dbReference>
<dbReference type="SUPFAM" id="SSF50249">
    <property type="entry name" value="Nucleic acid-binding proteins"/>
    <property type="match status" value="2"/>
</dbReference>
<dbReference type="SUPFAM" id="SSF50104">
    <property type="entry name" value="Translation proteins SH3-like domain"/>
    <property type="match status" value="1"/>
</dbReference>
<dbReference type="PROSITE" id="PS01275">
    <property type="entry name" value="EFP"/>
    <property type="match status" value="1"/>
</dbReference>